<feature type="chain" id="PRO_0000328416" description="DnaJ homolog subfamily C member 7 homolog">
    <location>
        <begin position="1"/>
        <end position="539"/>
    </location>
</feature>
<feature type="repeat" description="TPR 1">
    <location>
        <begin position="3"/>
        <end position="36"/>
    </location>
</feature>
<feature type="repeat" description="TPR 2">
    <location>
        <begin position="75"/>
        <end position="108"/>
    </location>
</feature>
<feature type="repeat" description="TPR 3">
    <location>
        <begin position="189"/>
        <end position="222"/>
    </location>
</feature>
<feature type="repeat" description="TPR 4">
    <location>
        <begin position="235"/>
        <end position="268"/>
    </location>
</feature>
<feature type="repeat" description="TPR 5">
    <location>
        <begin position="273"/>
        <end position="306"/>
    </location>
</feature>
<feature type="repeat" description="TPR 6">
    <location>
        <begin position="307"/>
        <end position="340"/>
    </location>
</feature>
<feature type="domain" description="J" evidence="1">
    <location>
        <begin position="361"/>
        <end position="431"/>
    </location>
</feature>
<feature type="region of interest" description="Disordered" evidence="2">
    <location>
        <begin position="512"/>
        <end position="539"/>
    </location>
</feature>
<feature type="compositionally biased region" description="Basic residues" evidence="2">
    <location>
        <begin position="521"/>
        <end position="531"/>
    </location>
</feature>
<dbReference type="EMBL" id="AAFI02000119">
    <property type="protein sequence ID" value="EAL63123.1"/>
    <property type="molecule type" value="Genomic_DNA"/>
</dbReference>
<dbReference type="RefSeq" id="XP_636618.1">
    <property type="nucleotide sequence ID" value="XM_631526.1"/>
</dbReference>
<dbReference type="SMR" id="Q54IP0"/>
<dbReference type="FunCoup" id="Q54IP0">
    <property type="interactions" value="982"/>
</dbReference>
<dbReference type="STRING" id="44689.Q54IP0"/>
<dbReference type="PaxDb" id="44689-DDB0233605"/>
<dbReference type="EnsemblProtists" id="EAL63123">
    <property type="protein sequence ID" value="EAL63123"/>
    <property type="gene ID" value="DDB_G0288639"/>
</dbReference>
<dbReference type="GeneID" id="8626720"/>
<dbReference type="KEGG" id="ddi:DDB_G0288639"/>
<dbReference type="dictyBase" id="DDB_G0288639"/>
<dbReference type="VEuPathDB" id="AmoebaDB:DDB_G0288639"/>
<dbReference type="eggNOG" id="KOG0550">
    <property type="taxonomic scope" value="Eukaryota"/>
</dbReference>
<dbReference type="HOGENOM" id="CLU_015935_3_1_1"/>
<dbReference type="InParanoid" id="Q54IP0"/>
<dbReference type="OMA" id="KLYMNRA"/>
<dbReference type="PhylomeDB" id="Q54IP0"/>
<dbReference type="PRO" id="PR:Q54IP0"/>
<dbReference type="Proteomes" id="UP000002195">
    <property type="component" value="Chromosome 5"/>
</dbReference>
<dbReference type="GO" id="GO:0045335">
    <property type="term" value="C:phagocytic vesicle"/>
    <property type="evidence" value="ECO:0007005"/>
    <property type="project" value="dictyBase"/>
</dbReference>
<dbReference type="CDD" id="cd06257">
    <property type="entry name" value="DnaJ"/>
    <property type="match status" value="1"/>
</dbReference>
<dbReference type="FunFam" id="1.25.40.10:FF:000097">
    <property type="entry name" value="DnaJ homolog subfamily C member 7 homolog"/>
    <property type="match status" value="1"/>
</dbReference>
<dbReference type="FunFam" id="1.10.287.110:FF:000055">
    <property type="entry name" value="DnaJ subfamily C member 7"/>
    <property type="match status" value="1"/>
</dbReference>
<dbReference type="Gene3D" id="1.10.287.110">
    <property type="entry name" value="DnaJ domain"/>
    <property type="match status" value="1"/>
</dbReference>
<dbReference type="Gene3D" id="1.25.40.10">
    <property type="entry name" value="Tetratricopeptide repeat domain"/>
    <property type="match status" value="1"/>
</dbReference>
<dbReference type="InterPro" id="IPR001623">
    <property type="entry name" value="DnaJ_domain"/>
</dbReference>
<dbReference type="InterPro" id="IPR018253">
    <property type="entry name" value="DnaJ_domain_CS"/>
</dbReference>
<dbReference type="InterPro" id="IPR036869">
    <property type="entry name" value="J_dom_sf"/>
</dbReference>
<dbReference type="InterPro" id="IPR011990">
    <property type="entry name" value="TPR-like_helical_dom_sf"/>
</dbReference>
<dbReference type="InterPro" id="IPR019734">
    <property type="entry name" value="TPR_rpt"/>
</dbReference>
<dbReference type="PANTHER" id="PTHR45188:SF2">
    <property type="entry name" value="DNAJ HOMOLOG SUBFAMILY C MEMBER 7"/>
    <property type="match status" value="1"/>
</dbReference>
<dbReference type="PANTHER" id="PTHR45188">
    <property type="entry name" value="DNAJ PROTEIN P58IPK HOMOLOG"/>
    <property type="match status" value="1"/>
</dbReference>
<dbReference type="Pfam" id="PF00226">
    <property type="entry name" value="DnaJ"/>
    <property type="match status" value="1"/>
</dbReference>
<dbReference type="Pfam" id="PF00515">
    <property type="entry name" value="TPR_1"/>
    <property type="match status" value="1"/>
</dbReference>
<dbReference type="Pfam" id="PF14559">
    <property type="entry name" value="TPR_19"/>
    <property type="match status" value="1"/>
</dbReference>
<dbReference type="Pfam" id="PF13181">
    <property type="entry name" value="TPR_8"/>
    <property type="match status" value="1"/>
</dbReference>
<dbReference type="PRINTS" id="PR00625">
    <property type="entry name" value="JDOMAIN"/>
</dbReference>
<dbReference type="SMART" id="SM00271">
    <property type="entry name" value="DnaJ"/>
    <property type="match status" value="1"/>
</dbReference>
<dbReference type="SMART" id="SM00028">
    <property type="entry name" value="TPR"/>
    <property type="match status" value="7"/>
</dbReference>
<dbReference type="SUPFAM" id="SSF46565">
    <property type="entry name" value="Chaperone J-domain"/>
    <property type="match status" value="1"/>
</dbReference>
<dbReference type="SUPFAM" id="SSF48452">
    <property type="entry name" value="TPR-like"/>
    <property type="match status" value="3"/>
</dbReference>
<dbReference type="PROSITE" id="PS00636">
    <property type="entry name" value="DNAJ_1"/>
    <property type="match status" value="1"/>
</dbReference>
<dbReference type="PROSITE" id="PS50076">
    <property type="entry name" value="DNAJ_2"/>
    <property type="match status" value="1"/>
</dbReference>
<dbReference type="PROSITE" id="PS50005">
    <property type="entry name" value="TPR"/>
    <property type="match status" value="6"/>
</dbReference>
<dbReference type="PROSITE" id="PS50293">
    <property type="entry name" value="TPR_REGION"/>
    <property type="match status" value="1"/>
</dbReference>
<protein>
    <recommendedName>
        <fullName>DnaJ homolog subfamily C member 7 homolog</fullName>
    </recommendedName>
</protein>
<gene>
    <name type="primary">dnajc7</name>
    <name type="ORF">DDB_G0288639</name>
</gene>
<name>DNJC7_DICDI</name>
<sequence>MDHEECKTQGNNYFKQSQYMDAIRCYTQAIELSNGTIAAYYGNRAAAYLAICTKSSLQDSIKDSLKAIELERSFIKGYTRASKAYIHLAQYDQAASIIVRGLVFDPRNNELLQEKNQIDSIQRTISSLTKEKALSNPSSSLNQIENVLSQSKYNTQLQVLKARVLIELKQYPQASNLMTTLLQEDSRNPEYLYVRGLSLYYQNNFPLALQHFQNSLTYDPDYSESRVALKRLRSIESKKKEGNEYFQSKNYQAAYDSFTEALSIDPKLETMNSQLYSNRAAALVHLNRISEAINDCTSAVTIDPNYGKAYIRRAQCQMKQENYEDAVRDYEKAQSLDPENGELQRNIKEAKIAHKKSLRKDYYKILGVSKEAGETEIKKAYRKLALQYHPDKNNQLPEEEKAQAEKMFKDIGEAYSVLSDEKKKRQYDMGQDENGMPFDADMGGVDINSVFSQFFNQGGMGGGMGGGGFGGMGGGGFGGMGGGGFSGMGGGGGFGGMPFGFDMGGGGGYGGMGGGFGGHSGHSHGGSRSRSSRGGNEYR</sequence>
<accession>Q54IP0</accession>
<organism>
    <name type="scientific">Dictyostelium discoideum</name>
    <name type="common">Social amoeba</name>
    <dbReference type="NCBI Taxonomy" id="44689"/>
    <lineage>
        <taxon>Eukaryota</taxon>
        <taxon>Amoebozoa</taxon>
        <taxon>Evosea</taxon>
        <taxon>Eumycetozoa</taxon>
        <taxon>Dictyostelia</taxon>
        <taxon>Dictyosteliales</taxon>
        <taxon>Dictyosteliaceae</taxon>
        <taxon>Dictyostelium</taxon>
    </lineage>
</organism>
<keyword id="KW-0143">Chaperone</keyword>
<keyword id="KW-1185">Reference proteome</keyword>
<keyword id="KW-0677">Repeat</keyword>
<keyword id="KW-0802">TPR repeat</keyword>
<reference key="1">
    <citation type="journal article" date="2005" name="Nature">
        <title>The genome of the social amoeba Dictyostelium discoideum.</title>
        <authorList>
            <person name="Eichinger L."/>
            <person name="Pachebat J.A."/>
            <person name="Gloeckner G."/>
            <person name="Rajandream M.A."/>
            <person name="Sucgang R."/>
            <person name="Berriman M."/>
            <person name="Song J."/>
            <person name="Olsen R."/>
            <person name="Szafranski K."/>
            <person name="Xu Q."/>
            <person name="Tunggal B."/>
            <person name="Kummerfeld S."/>
            <person name="Madera M."/>
            <person name="Konfortov B.A."/>
            <person name="Rivero F."/>
            <person name="Bankier A.T."/>
            <person name="Lehmann R."/>
            <person name="Hamlin N."/>
            <person name="Davies R."/>
            <person name="Gaudet P."/>
            <person name="Fey P."/>
            <person name="Pilcher K."/>
            <person name="Chen G."/>
            <person name="Saunders D."/>
            <person name="Sodergren E.J."/>
            <person name="Davis P."/>
            <person name="Kerhornou A."/>
            <person name="Nie X."/>
            <person name="Hall N."/>
            <person name="Anjard C."/>
            <person name="Hemphill L."/>
            <person name="Bason N."/>
            <person name="Farbrother P."/>
            <person name="Desany B."/>
            <person name="Just E."/>
            <person name="Morio T."/>
            <person name="Rost R."/>
            <person name="Churcher C.M."/>
            <person name="Cooper J."/>
            <person name="Haydock S."/>
            <person name="van Driessche N."/>
            <person name="Cronin A."/>
            <person name="Goodhead I."/>
            <person name="Muzny D.M."/>
            <person name="Mourier T."/>
            <person name="Pain A."/>
            <person name="Lu M."/>
            <person name="Harper D."/>
            <person name="Lindsay R."/>
            <person name="Hauser H."/>
            <person name="James K.D."/>
            <person name="Quiles M."/>
            <person name="Madan Babu M."/>
            <person name="Saito T."/>
            <person name="Buchrieser C."/>
            <person name="Wardroper A."/>
            <person name="Felder M."/>
            <person name="Thangavelu M."/>
            <person name="Johnson D."/>
            <person name="Knights A."/>
            <person name="Loulseged H."/>
            <person name="Mungall K.L."/>
            <person name="Oliver K."/>
            <person name="Price C."/>
            <person name="Quail M.A."/>
            <person name="Urushihara H."/>
            <person name="Hernandez J."/>
            <person name="Rabbinowitsch E."/>
            <person name="Steffen D."/>
            <person name="Sanders M."/>
            <person name="Ma J."/>
            <person name="Kohara Y."/>
            <person name="Sharp S."/>
            <person name="Simmonds M.N."/>
            <person name="Spiegler S."/>
            <person name="Tivey A."/>
            <person name="Sugano S."/>
            <person name="White B."/>
            <person name="Walker D."/>
            <person name="Woodward J.R."/>
            <person name="Winckler T."/>
            <person name="Tanaka Y."/>
            <person name="Shaulsky G."/>
            <person name="Schleicher M."/>
            <person name="Weinstock G.M."/>
            <person name="Rosenthal A."/>
            <person name="Cox E.C."/>
            <person name="Chisholm R.L."/>
            <person name="Gibbs R.A."/>
            <person name="Loomis W.F."/>
            <person name="Platzer M."/>
            <person name="Kay R.R."/>
            <person name="Williams J.G."/>
            <person name="Dear P.H."/>
            <person name="Noegel A.A."/>
            <person name="Barrell B.G."/>
            <person name="Kuspa A."/>
        </authorList>
    </citation>
    <scope>NUCLEOTIDE SEQUENCE [LARGE SCALE GENOMIC DNA]</scope>
    <source>
        <strain>AX4</strain>
    </source>
</reference>
<reference key="2">
    <citation type="journal article" date="2006" name="Mol. Cell. Proteomics">
        <title>Proteomics fingerprinting of phagosome maturation and evidence for the role of a Galpha during uptake.</title>
        <authorList>
            <person name="Gotthardt D."/>
            <person name="Blancheteau V."/>
            <person name="Bosserhoff A."/>
            <person name="Ruppert T."/>
            <person name="Delorenzi M."/>
            <person name="Soldati T."/>
        </authorList>
    </citation>
    <scope>IDENTIFICATION BY MASS SPECTROMETRY [LARGE SCALE ANALYSIS]</scope>
    <source>
        <strain>AX2</strain>
    </source>
</reference>
<proteinExistence type="evidence at protein level"/>
<evidence type="ECO:0000255" key="1">
    <source>
        <dbReference type="PROSITE-ProRule" id="PRU00286"/>
    </source>
</evidence>
<evidence type="ECO:0000256" key="2">
    <source>
        <dbReference type="SAM" id="MobiDB-lite"/>
    </source>
</evidence>